<evidence type="ECO:0000255" key="1">
    <source>
        <dbReference type="HAMAP-Rule" id="MF_00791"/>
    </source>
</evidence>
<sequence length="126" mass="13872">MSALDDSIRVEVKTEYIEQQSSPEDQKYLFSYTITIVNLGEQAAKLETRHWIITDANGKITEVQGAGVVGETPTIPPNTAYQYTSGTVLDTPLGIMYGTYGMVSESGERFKATIKPFRLALPGLLH</sequence>
<organism>
    <name type="scientific">Shewanella sp. (strain MR-7)</name>
    <dbReference type="NCBI Taxonomy" id="60481"/>
    <lineage>
        <taxon>Bacteria</taxon>
        <taxon>Pseudomonadati</taxon>
        <taxon>Pseudomonadota</taxon>
        <taxon>Gammaproteobacteria</taxon>
        <taxon>Alteromonadales</taxon>
        <taxon>Shewanellaceae</taxon>
        <taxon>Shewanella</taxon>
    </lineage>
</organism>
<accession>Q0HS05</accession>
<reference key="1">
    <citation type="submission" date="2006-08" db="EMBL/GenBank/DDBJ databases">
        <title>Complete sequence of chromosome 1 of Shewanella sp. MR-7.</title>
        <authorList>
            <person name="Copeland A."/>
            <person name="Lucas S."/>
            <person name="Lapidus A."/>
            <person name="Barry K."/>
            <person name="Detter J.C."/>
            <person name="Glavina del Rio T."/>
            <person name="Hammon N."/>
            <person name="Israni S."/>
            <person name="Dalin E."/>
            <person name="Tice H."/>
            <person name="Pitluck S."/>
            <person name="Kiss H."/>
            <person name="Brettin T."/>
            <person name="Bruce D."/>
            <person name="Han C."/>
            <person name="Tapia R."/>
            <person name="Gilna P."/>
            <person name="Schmutz J."/>
            <person name="Larimer F."/>
            <person name="Land M."/>
            <person name="Hauser L."/>
            <person name="Kyrpides N."/>
            <person name="Mikhailova N."/>
            <person name="Nealson K."/>
            <person name="Konstantinidis K."/>
            <person name="Klappenbach J."/>
            <person name="Tiedje J."/>
            <person name="Richardson P."/>
        </authorList>
    </citation>
    <scope>NUCLEOTIDE SEQUENCE [LARGE SCALE GENOMIC DNA]</scope>
    <source>
        <strain>MR-7</strain>
    </source>
</reference>
<protein>
    <recommendedName>
        <fullName evidence="1">Protein ApaG</fullName>
    </recommendedName>
</protein>
<name>APAG_SHESR</name>
<gene>
    <name evidence="1" type="primary">apaG</name>
    <name type="ordered locus">Shewmr7_3116</name>
</gene>
<proteinExistence type="inferred from homology"/>
<feature type="chain" id="PRO_1000083657" description="Protein ApaG">
    <location>
        <begin position="1"/>
        <end position="126"/>
    </location>
</feature>
<feature type="domain" description="ApaG" evidence="1">
    <location>
        <begin position="2"/>
        <end position="126"/>
    </location>
</feature>
<dbReference type="EMBL" id="CP000444">
    <property type="protein sequence ID" value="ABI44100.1"/>
    <property type="molecule type" value="Genomic_DNA"/>
</dbReference>
<dbReference type="SMR" id="Q0HS05"/>
<dbReference type="KEGG" id="shm:Shewmr7_3116"/>
<dbReference type="HOGENOM" id="CLU_128074_0_0_6"/>
<dbReference type="GO" id="GO:0070987">
    <property type="term" value="P:error-free translesion synthesis"/>
    <property type="evidence" value="ECO:0007669"/>
    <property type="project" value="TreeGrafter"/>
</dbReference>
<dbReference type="Gene3D" id="2.60.40.1470">
    <property type="entry name" value="ApaG domain"/>
    <property type="match status" value="1"/>
</dbReference>
<dbReference type="HAMAP" id="MF_00791">
    <property type="entry name" value="ApaG"/>
    <property type="match status" value="1"/>
</dbReference>
<dbReference type="InterPro" id="IPR007474">
    <property type="entry name" value="ApaG_domain"/>
</dbReference>
<dbReference type="InterPro" id="IPR036767">
    <property type="entry name" value="ApaG_sf"/>
</dbReference>
<dbReference type="InterPro" id="IPR023065">
    <property type="entry name" value="Uncharacterised_ApaG"/>
</dbReference>
<dbReference type="NCBIfam" id="NF003967">
    <property type="entry name" value="PRK05461.1"/>
    <property type="match status" value="1"/>
</dbReference>
<dbReference type="PANTHER" id="PTHR14289">
    <property type="entry name" value="F-BOX ONLY PROTEIN 3"/>
    <property type="match status" value="1"/>
</dbReference>
<dbReference type="PANTHER" id="PTHR14289:SF16">
    <property type="entry name" value="POLYMERASE DELTA-INTERACTING PROTEIN 2"/>
    <property type="match status" value="1"/>
</dbReference>
<dbReference type="Pfam" id="PF04379">
    <property type="entry name" value="DUF525"/>
    <property type="match status" value="1"/>
</dbReference>
<dbReference type="SUPFAM" id="SSF110069">
    <property type="entry name" value="ApaG-like"/>
    <property type="match status" value="1"/>
</dbReference>
<dbReference type="PROSITE" id="PS51087">
    <property type="entry name" value="APAG"/>
    <property type="match status" value="1"/>
</dbReference>